<comment type="function">
    <text evidence="2">With S4 and S5 plays an important role in translational accuracy.</text>
</comment>
<comment type="function">
    <text evidence="2">Interacts with and stabilizes bases of the 16S rRNA that are involved in tRNA selection in the A site and with the mRNA backbone. Located at the interface of the 30S and 50S subunits, it traverses the body of the 30S subunit contacting proteins on the other side and probably holding the rRNA structure together. The combined cluster of proteins S8, S12 and S17 appears to hold together the shoulder and platform of the 30S subunit.</text>
</comment>
<comment type="subunit">
    <text evidence="2">Part of the 30S ribosomal subunit. Contacts proteins S8 and S17. May interact with IF1 in the 30S initiation complex.</text>
</comment>
<comment type="similarity">
    <text evidence="2">Belongs to the universal ribosomal protein uS12 family.</text>
</comment>
<proteinExistence type="inferred from homology"/>
<gene>
    <name evidence="2" type="primary">rpsL</name>
    <name type="ordered locus">Spro_4551</name>
</gene>
<accession>A8GKK4</accession>
<protein>
    <recommendedName>
        <fullName evidence="2">Small ribosomal subunit protein uS12</fullName>
    </recommendedName>
    <alternativeName>
        <fullName evidence="3">30S ribosomal protein S12</fullName>
    </alternativeName>
</protein>
<reference key="1">
    <citation type="submission" date="2007-09" db="EMBL/GenBank/DDBJ databases">
        <title>Complete sequence of chromosome of Serratia proteamaculans 568.</title>
        <authorList>
            <consortium name="US DOE Joint Genome Institute"/>
            <person name="Copeland A."/>
            <person name="Lucas S."/>
            <person name="Lapidus A."/>
            <person name="Barry K."/>
            <person name="Glavina del Rio T."/>
            <person name="Dalin E."/>
            <person name="Tice H."/>
            <person name="Pitluck S."/>
            <person name="Chain P."/>
            <person name="Malfatti S."/>
            <person name="Shin M."/>
            <person name="Vergez L."/>
            <person name="Schmutz J."/>
            <person name="Larimer F."/>
            <person name="Land M."/>
            <person name="Hauser L."/>
            <person name="Kyrpides N."/>
            <person name="Kim E."/>
            <person name="Taghavi S."/>
            <person name="Newman L."/>
            <person name="Vangronsveld J."/>
            <person name="van der Lelie D."/>
            <person name="Richardson P."/>
        </authorList>
    </citation>
    <scope>NUCLEOTIDE SEQUENCE [LARGE SCALE GENOMIC DNA]</scope>
    <source>
        <strain>568</strain>
    </source>
</reference>
<keyword id="KW-0488">Methylation</keyword>
<keyword id="KW-0687">Ribonucleoprotein</keyword>
<keyword id="KW-0689">Ribosomal protein</keyword>
<keyword id="KW-0694">RNA-binding</keyword>
<keyword id="KW-0699">rRNA-binding</keyword>
<keyword id="KW-0820">tRNA-binding</keyword>
<sequence>MATINQLVRKPRSVKAAKSNVPALEACPQKRGVCTRVYTTTPKKPNSALRKVCRVRLTNGFEVTSYIGGEGHNLQEHSVILIRGGRVKDLPGVRYHTVRGALDCSGVKDRKQARSKYGVKKPKA</sequence>
<name>RS12_SERP5</name>
<evidence type="ECO:0000250" key="1"/>
<evidence type="ECO:0000255" key="2">
    <source>
        <dbReference type="HAMAP-Rule" id="MF_00403"/>
    </source>
</evidence>
<evidence type="ECO:0000305" key="3"/>
<dbReference type="EMBL" id="CP000826">
    <property type="protein sequence ID" value="ABV43644.1"/>
    <property type="molecule type" value="Genomic_DNA"/>
</dbReference>
<dbReference type="SMR" id="A8GKK4"/>
<dbReference type="STRING" id="399741.Spro_4551"/>
<dbReference type="KEGG" id="spe:Spro_4551"/>
<dbReference type="eggNOG" id="COG0048">
    <property type="taxonomic scope" value="Bacteria"/>
</dbReference>
<dbReference type="HOGENOM" id="CLU_104295_1_2_6"/>
<dbReference type="OrthoDB" id="9802366at2"/>
<dbReference type="GO" id="GO:0015935">
    <property type="term" value="C:small ribosomal subunit"/>
    <property type="evidence" value="ECO:0007669"/>
    <property type="project" value="InterPro"/>
</dbReference>
<dbReference type="GO" id="GO:0019843">
    <property type="term" value="F:rRNA binding"/>
    <property type="evidence" value="ECO:0007669"/>
    <property type="project" value="UniProtKB-UniRule"/>
</dbReference>
<dbReference type="GO" id="GO:0003735">
    <property type="term" value="F:structural constituent of ribosome"/>
    <property type="evidence" value="ECO:0007669"/>
    <property type="project" value="InterPro"/>
</dbReference>
<dbReference type="GO" id="GO:0000049">
    <property type="term" value="F:tRNA binding"/>
    <property type="evidence" value="ECO:0007669"/>
    <property type="project" value="UniProtKB-UniRule"/>
</dbReference>
<dbReference type="GO" id="GO:0006412">
    <property type="term" value="P:translation"/>
    <property type="evidence" value="ECO:0007669"/>
    <property type="project" value="UniProtKB-UniRule"/>
</dbReference>
<dbReference type="CDD" id="cd03368">
    <property type="entry name" value="Ribosomal_S12"/>
    <property type="match status" value="1"/>
</dbReference>
<dbReference type="FunFam" id="2.40.50.140:FF:000001">
    <property type="entry name" value="30S ribosomal protein S12"/>
    <property type="match status" value="1"/>
</dbReference>
<dbReference type="Gene3D" id="2.40.50.140">
    <property type="entry name" value="Nucleic acid-binding proteins"/>
    <property type="match status" value="1"/>
</dbReference>
<dbReference type="HAMAP" id="MF_00403_B">
    <property type="entry name" value="Ribosomal_uS12_B"/>
    <property type="match status" value="1"/>
</dbReference>
<dbReference type="InterPro" id="IPR012340">
    <property type="entry name" value="NA-bd_OB-fold"/>
</dbReference>
<dbReference type="InterPro" id="IPR006032">
    <property type="entry name" value="Ribosomal_uS12"/>
</dbReference>
<dbReference type="InterPro" id="IPR005679">
    <property type="entry name" value="Ribosomal_uS12_bac"/>
</dbReference>
<dbReference type="NCBIfam" id="TIGR00981">
    <property type="entry name" value="rpsL_bact"/>
    <property type="match status" value="1"/>
</dbReference>
<dbReference type="PANTHER" id="PTHR11652">
    <property type="entry name" value="30S RIBOSOMAL PROTEIN S12 FAMILY MEMBER"/>
    <property type="match status" value="1"/>
</dbReference>
<dbReference type="Pfam" id="PF00164">
    <property type="entry name" value="Ribosom_S12_S23"/>
    <property type="match status" value="1"/>
</dbReference>
<dbReference type="PIRSF" id="PIRSF002133">
    <property type="entry name" value="Ribosomal_S12/S23"/>
    <property type="match status" value="1"/>
</dbReference>
<dbReference type="PRINTS" id="PR01034">
    <property type="entry name" value="RIBOSOMALS12"/>
</dbReference>
<dbReference type="SUPFAM" id="SSF50249">
    <property type="entry name" value="Nucleic acid-binding proteins"/>
    <property type="match status" value="1"/>
</dbReference>
<dbReference type="PROSITE" id="PS00055">
    <property type="entry name" value="RIBOSOMAL_S12"/>
    <property type="match status" value="1"/>
</dbReference>
<organism>
    <name type="scientific">Serratia proteamaculans (strain 568)</name>
    <dbReference type="NCBI Taxonomy" id="399741"/>
    <lineage>
        <taxon>Bacteria</taxon>
        <taxon>Pseudomonadati</taxon>
        <taxon>Pseudomonadota</taxon>
        <taxon>Gammaproteobacteria</taxon>
        <taxon>Enterobacterales</taxon>
        <taxon>Yersiniaceae</taxon>
        <taxon>Serratia</taxon>
    </lineage>
</organism>
<feature type="chain" id="PRO_1000060818" description="Small ribosomal subunit protein uS12">
    <location>
        <begin position="1"/>
        <end position="124"/>
    </location>
</feature>
<feature type="modified residue" description="3-methylthioaspartic acid" evidence="1">
    <location>
        <position position="89"/>
    </location>
</feature>